<keyword id="KW-0428">Leader peptide</keyword>
<keyword id="KW-1185">Reference proteome</keyword>
<reference key="1">
    <citation type="journal article" date="1987" name="J. Biol. Chem.">
        <title>Nucleotide sequence of the asd gene of Streptococcus mutans. Identification of the promoter region and evidence for attenuator-like sequences preceding the structural gene.</title>
        <authorList>
            <person name="Cardineau G.A."/>
            <person name="Curtiss R. III"/>
        </authorList>
    </citation>
    <scope>NUCLEOTIDE SEQUENCE [GENOMIC DNA]</scope>
</reference>
<reference key="2">
    <citation type="journal article" date="2002" name="Proc. Natl. Acad. Sci. U.S.A.">
        <title>Genome sequence of Streptococcus mutans UA159, a cariogenic dental pathogen.</title>
        <authorList>
            <person name="Ajdic D.J."/>
            <person name="McShan W.M."/>
            <person name="McLaughlin R.E."/>
            <person name="Savic G."/>
            <person name="Chang J."/>
            <person name="Carson M.B."/>
            <person name="Primeaux C."/>
            <person name="Tian R."/>
            <person name="Kenton S."/>
            <person name="Jia H.G."/>
            <person name="Lin S.P."/>
            <person name="Qian Y."/>
            <person name="Li S."/>
            <person name="Zhu H."/>
            <person name="Najar F.Z."/>
            <person name="Lai H."/>
            <person name="White J."/>
            <person name="Roe B.A."/>
            <person name="Ferretti J.J."/>
        </authorList>
    </citation>
    <scope>NUCLEOTIDE SEQUENCE [LARGE SCALE GENOMIC DNA]</scope>
    <source>
        <strain>ATCC 700610 / UA159</strain>
    </source>
</reference>
<feature type="chain" id="PRO_0000196520" description="Aspartate-semialdehyde dehydrogenase leader peptide">
    <location>
        <begin position="1"/>
        <end position="42"/>
    </location>
</feature>
<feature type="sequence conflict" description="In Ref. 1; AAA26849." evidence="1" ref="1">
    <original>FV</original>
    <variation>LYKK</variation>
    <location>
        <begin position="41"/>
        <end position="42"/>
    </location>
</feature>
<evidence type="ECO:0000305" key="1"/>
<name>LPAS_STRMU</name>
<gene>
    <name type="ordered locus">SMU_988.1</name>
</gene>
<organism>
    <name type="scientific">Streptococcus mutans serotype c (strain ATCC 700610 / UA159)</name>
    <dbReference type="NCBI Taxonomy" id="210007"/>
    <lineage>
        <taxon>Bacteria</taxon>
        <taxon>Bacillati</taxon>
        <taxon>Bacillota</taxon>
        <taxon>Bacilli</taxon>
        <taxon>Lactobacillales</taxon>
        <taxon>Streptococcaceae</taxon>
        <taxon>Streptococcus</taxon>
    </lineage>
</organism>
<protein>
    <recommendedName>
        <fullName>Aspartate-semialdehyde dehydrogenase leader peptide</fullName>
    </recommendedName>
</protein>
<sequence>MQEQILASCVNLLATLNQKCLFPCNNKGFFIEFNSLWTFFFV</sequence>
<dbReference type="EMBL" id="J02667">
    <property type="protein sequence ID" value="AAA26849.1"/>
    <property type="molecule type" value="Genomic_DNA"/>
</dbReference>
<dbReference type="EMBL" id="AE014133">
    <property type="status" value="NOT_ANNOTATED_CDS"/>
    <property type="molecule type" value="Genomic_DNA"/>
</dbReference>
<dbReference type="PIR" id="B29137">
    <property type="entry name" value="B29137"/>
</dbReference>
<dbReference type="RefSeq" id="WP_002262852.1">
    <property type="nucleotide sequence ID" value="NC_004350.2"/>
</dbReference>
<dbReference type="Proteomes" id="UP000002512">
    <property type="component" value="Chromosome"/>
</dbReference>
<proteinExistence type="predicted"/>
<accession>P10540</accession>